<gene>
    <name evidence="1" type="primary">trpB</name>
    <name type="ordered locus">Smal_2843</name>
</gene>
<protein>
    <recommendedName>
        <fullName evidence="1">Tryptophan synthase beta chain</fullName>
        <ecNumber evidence="1">4.2.1.20</ecNumber>
    </recommendedName>
</protein>
<sequence length="405" mass="43351">MSASPIADYHAFPDAQGHFGRYGGSFVAETLVGPLQELAQAYDQARQDPAFQAAYDRDLAHYVGRPSPIYHAQRLSDHVGGAQILLKREDLNHTGAHKINNTIGQALLAARMGKKRIIAETGAGQHGVASATVAARLGLECVVYMGATDIERQKINVYRMKLLGATVVPVTSGSATLKDALNEAMRDWVTNVQDTFYIIGTVAGPDPYPRMVRDFNAIVGREAREQMLAEYGRLPDAITACVGGGSNAIGLFHAFLNDRQVEIVGAEAAGDGIHTGRHAASIAAGRPGVLHGNRTYVLCDDDGQIIETHSVSAGLDYPGVGPEHAFLADSGRARYLGITDEEALQAFHLLAHTEGILPALESSHALAQAMKLARERPRDQIVLCNLSGRGDKDVHTIAAREGLVL</sequence>
<feature type="chain" id="PRO_1000095826" description="Tryptophan synthase beta chain">
    <location>
        <begin position="1"/>
        <end position="405"/>
    </location>
</feature>
<feature type="modified residue" description="N6-(pyridoxal phosphate)lysine" evidence="1">
    <location>
        <position position="98"/>
    </location>
</feature>
<proteinExistence type="inferred from homology"/>
<name>TRPB_STRM5</name>
<accession>B4SQU8</accession>
<evidence type="ECO:0000255" key="1">
    <source>
        <dbReference type="HAMAP-Rule" id="MF_00133"/>
    </source>
</evidence>
<organism>
    <name type="scientific">Stenotrophomonas maltophilia (strain R551-3)</name>
    <dbReference type="NCBI Taxonomy" id="391008"/>
    <lineage>
        <taxon>Bacteria</taxon>
        <taxon>Pseudomonadati</taxon>
        <taxon>Pseudomonadota</taxon>
        <taxon>Gammaproteobacteria</taxon>
        <taxon>Lysobacterales</taxon>
        <taxon>Lysobacteraceae</taxon>
        <taxon>Stenotrophomonas</taxon>
        <taxon>Stenotrophomonas maltophilia group</taxon>
    </lineage>
</organism>
<keyword id="KW-0028">Amino-acid biosynthesis</keyword>
<keyword id="KW-0057">Aromatic amino acid biosynthesis</keyword>
<keyword id="KW-0456">Lyase</keyword>
<keyword id="KW-0663">Pyridoxal phosphate</keyword>
<keyword id="KW-0822">Tryptophan biosynthesis</keyword>
<dbReference type="EC" id="4.2.1.20" evidence="1"/>
<dbReference type="EMBL" id="CP001111">
    <property type="protein sequence ID" value="ACF52543.1"/>
    <property type="molecule type" value="Genomic_DNA"/>
</dbReference>
<dbReference type="RefSeq" id="WP_012511719.1">
    <property type="nucleotide sequence ID" value="NC_011071.1"/>
</dbReference>
<dbReference type="SMR" id="B4SQU8"/>
<dbReference type="STRING" id="391008.Smal_2843"/>
<dbReference type="KEGG" id="smt:Smal_2843"/>
<dbReference type="eggNOG" id="COG0133">
    <property type="taxonomic scope" value="Bacteria"/>
</dbReference>
<dbReference type="HOGENOM" id="CLU_016734_3_1_6"/>
<dbReference type="OrthoDB" id="9766131at2"/>
<dbReference type="UniPathway" id="UPA00035">
    <property type="reaction ID" value="UER00044"/>
</dbReference>
<dbReference type="Proteomes" id="UP000001867">
    <property type="component" value="Chromosome"/>
</dbReference>
<dbReference type="GO" id="GO:0005737">
    <property type="term" value="C:cytoplasm"/>
    <property type="evidence" value="ECO:0007669"/>
    <property type="project" value="TreeGrafter"/>
</dbReference>
<dbReference type="GO" id="GO:0004834">
    <property type="term" value="F:tryptophan synthase activity"/>
    <property type="evidence" value="ECO:0007669"/>
    <property type="project" value="UniProtKB-UniRule"/>
</dbReference>
<dbReference type="CDD" id="cd06446">
    <property type="entry name" value="Trp-synth_B"/>
    <property type="match status" value="1"/>
</dbReference>
<dbReference type="FunFam" id="3.40.50.1100:FF:000001">
    <property type="entry name" value="Tryptophan synthase beta chain"/>
    <property type="match status" value="1"/>
</dbReference>
<dbReference type="FunFam" id="3.40.50.1100:FF:000004">
    <property type="entry name" value="Tryptophan synthase beta chain"/>
    <property type="match status" value="1"/>
</dbReference>
<dbReference type="Gene3D" id="3.40.50.1100">
    <property type="match status" value="2"/>
</dbReference>
<dbReference type="HAMAP" id="MF_00133">
    <property type="entry name" value="Trp_synth_beta"/>
    <property type="match status" value="1"/>
</dbReference>
<dbReference type="InterPro" id="IPR006653">
    <property type="entry name" value="Trp_synth_b_CS"/>
</dbReference>
<dbReference type="InterPro" id="IPR006654">
    <property type="entry name" value="Trp_synth_beta"/>
</dbReference>
<dbReference type="InterPro" id="IPR023026">
    <property type="entry name" value="Trp_synth_beta/beta-like"/>
</dbReference>
<dbReference type="InterPro" id="IPR001926">
    <property type="entry name" value="TrpB-like_PALP"/>
</dbReference>
<dbReference type="InterPro" id="IPR036052">
    <property type="entry name" value="TrpB-like_PALP_sf"/>
</dbReference>
<dbReference type="NCBIfam" id="TIGR00263">
    <property type="entry name" value="trpB"/>
    <property type="match status" value="1"/>
</dbReference>
<dbReference type="PANTHER" id="PTHR48077:SF3">
    <property type="entry name" value="TRYPTOPHAN SYNTHASE"/>
    <property type="match status" value="1"/>
</dbReference>
<dbReference type="PANTHER" id="PTHR48077">
    <property type="entry name" value="TRYPTOPHAN SYNTHASE-RELATED"/>
    <property type="match status" value="1"/>
</dbReference>
<dbReference type="Pfam" id="PF00291">
    <property type="entry name" value="PALP"/>
    <property type="match status" value="1"/>
</dbReference>
<dbReference type="PIRSF" id="PIRSF001413">
    <property type="entry name" value="Trp_syn_beta"/>
    <property type="match status" value="1"/>
</dbReference>
<dbReference type="SUPFAM" id="SSF53686">
    <property type="entry name" value="Tryptophan synthase beta subunit-like PLP-dependent enzymes"/>
    <property type="match status" value="1"/>
</dbReference>
<dbReference type="PROSITE" id="PS00168">
    <property type="entry name" value="TRP_SYNTHASE_BETA"/>
    <property type="match status" value="1"/>
</dbReference>
<comment type="function">
    <text evidence="1">The beta subunit is responsible for the synthesis of L-tryptophan from indole and L-serine.</text>
</comment>
<comment type="catalytic activity">
    <reaction evidence="1">
        <text>(1S,2R)-1-C-(indol-3-yl)glycerol 3-phosphate + L-serine = D-glyceraldehyde 3-phosphate + L-tryptophan + H2O</text>
        <dbReference type="Rhea" id="RHEA:10532"/>
        <dbReference type="ChEBI" id="CHEBI:15377"/>
        <dbReference type="ChEBI" id="CHEBI:33384"/>
        <dbReference type="ChEBI" id="CHEBI:57912"/>
        <dbReference type="ChEBI" id="CHEBI:58866"/>
        <dbReference type="ChEBI" id="CHEBI:59776"/>
        <dbReference type="EC" id="4.2.1.20"/>
    </reaction>
</comment>
<comment type="cofactor">
    <cofactor evidence="1">
        <name>pyridoxal 5'-phosphate</name>
        <dbReference type="ChEBI" id="CHEBI:597326"/>
    </cofactor>
</comment>
<comment type="pathway">
    <text evidence="1">Amino-acid biosynthesis; L-tryptophan biosynthesis; L-tryptophan from chorismate: step 5/5.</text>
</comment>
<comment type="subunit">
    <text evidence="1">Tetramer of two alpha and two beta chains.</text>
</comment>
<comment type="similarity">
    <text evidence="1">Belongs to the TrpB family.</text>
</comment>
<reference key="1">
    <citation type="submission" date="2008-06" db="EMBL/GenBank/DDBJ databases">
        <title>Complete sequence of Stenotrophomonas maltophilia R551-3.</title>
        <authorList>
            <consortium name="US DOE Joint Genome Institute"/>
            <person name="Lucas S."/>
            <person name="Copeland A."/>
            <person name="Lapidus A."/>
            <person name="Glavina del Rio T."/>
            <person name="Dalin E."/>
            <person name="Tice H."/>
            <person name="Pitluck S."/>
            <person name="Chain P."/>
            <person name="Malfatti S."/>
            <person name="Shin M."/>
            <person name="Vergez L."/>
            <person name="Lang D."/>
            <person name="Schmutz J."/>
            <person name="Larimer F."/>
            <person name="Land M."/>
            <person name="Hauser L."/>
            <person name="Kyrpides N."/>
            <person name="Mikhailova N."/>
            <person name="Taghavi S."/>
            <person name="Monchy S."/>
            <person name="Newman L."/>
            <person name="Vangronsveld J."/>
            <person name="van der Lelie D."/>
            <person name="Richardson P."/>
        </authorList>
    </citation>
    <scope>NUCLEOTIDE SEQUENCE [LARGE SCALE GENOMIC DNA]</scope>
    <source>
        <strain>R551-3</strain>
    </source>
</reference>